<accession>P42961</accession>
<proteinExistence type="inferred from homology"/>
<reference key="1">
    <citation type="journal article" date="1995" name="Microbiology">
        <title>Determination of a 17,484 bp nucleotide sequence around the 39 degrees region of the Bacillus subtilis chromosome and similarity analysis of the products of putative ORFs.</title>
        <authorList>
            <person name="Akagawa E."/>
            <person name="Kurita K."/>
            <person name="Sugawara T."/>
            <person name="Nakamura K."/>
            <person name="Kasahara Y."/>
            <person name="Ogasawara N."/>
            <person name="Yamane K."/>
        </authorList>
    </citation>
    <scope>NUCLEOTIDE SEQUENCE [GENOMIC DNA]</scope>
    <source>
        <strain>168</strain>
    </source>
</reference>
<reference key="2">
    <citation type="journal article" date="1996" name="Microbiology">
        <title>The 25 degrees-36 degrees region of the Bacillus subtilis chromosome: determination of the sequence of a 146 kb segment and identification of 113 genes.</title>
        <authorList>
            <person name="Yamane K."/>
            <person name="Kumano M."/>
            <person name="Kurita K."/>
        </authorList>
    </citation>
    <scope>NUCLEOTIDE SEQUENCE [GENOMIC DNA]</scope>
    <source>
        <strain>168</strain>
    </source>
</reference>
<reference key="3">
    <citation type="journal article" date="1997" name="Nature">
        <title>The complete genome sequence of the Gram-positive bacterium Bacillus subtilis.</title>
        <authorList>
            <person name="Kunst F."/>
            <person name="Ogasawara N."/>
            <person name="Moszer I."/>
            <person name="Albertini A.M."/>
            <person name="Alloni G."/>
            <person name="Azevedo V."/>
            <person name="Bertero M.G."/>
            <person name="Bessieres P."/>
            <person name="Bolotin A."/>
            <person name="Borchert S."/>
            <person name="Borriss R."/>
            <person name="Boursier L."/>
            <person name="Brans A."/>
            <person name="Braun M."/>
            <person name="Brignell S.C."/>
            <person name="Bron S."/>
            <person name="Brouillet S."/>
            <person name="Bruschi C.V."/>
            <person name="Caldwell B."/>
            <person name="Capuano V."/>
            <person name="Carter N.M."/>
            <person name="Choi S.-K."/>
            <person name="Codani J.-J."/>
            <person name="Connerton I.F."/>
            <person name="Cummings N.J."/>
            <person name="Daniel R.A."/>
            <person name="Denizot F."/>
            <person name="Devine K.M."/>
            <person name="Duesterhoeft A."/>
            <person name="Ehrlich S.D."/>
            <person name="Emmerson P.T."/>
            <person name="Entian K.-D."/>
            <person name="Errington J."/>
            <person name="Fabret C."/>
            <person name="Ferrari E."/>
            <person name="Foulger D."/>
            <person name="Fritz C."/>
            <person name="Fujita M."/>
            <person name="Fujita Y."/>
            <person name="Fuma S."/>
            <person name="Galizzi A."/>
            <person name="Galleron N."/>
            <person name="Ghim S.-Y."/>
            <person name="Glaser P."/>
            <person name="Goffeau A."/>
            <person name="Golightly E.J."/>
            <person name="Grandi G."/>
            <person name="Guiseppi G."/>
            <person name="Guy B.J."/>
            <person name="Haga K."/>
            <person name="Haiech J."/>
            <person name="Harwood C.R."/>
            <person name="Henaut A."/>
            <person name="Hilbert H."/>
            <person name="Holsappel S."/>
            <person name="Hosono S."/>
            <person name="Hullo M.-F."/>
            <person name="Itaya M."/>
            <person name="Jones L.-M."/>
            <person name="Joris B."/>
            <person name="Karamata D."/>
            <person name="Kasahara Y."/>
            <person name="Klaerr-Blanchard M."/>
            <person name="Klein C."/>
            <person name="Kobayashi Y."/>
            <person name="Koetter P."/>
            <person name="Koningstein G."/>
            <person name="Krogh S."/>
            <person name="Kumano M."/>
            <person name="Kurita K."/>
            <person name="Lapidus A."/>
            <person name="Lardinois S."/>
            <person name="Lauber J."/>
            <person name="Lazarevic V."/>
            <person name="Lee S.-M."/>
            <person name="Levine A."/>
            <person name="Liu H."/>
            <person name="Masuda S."/>
            <person name="Mauel C."/>
            <person name="Medigue C."/>
            <person name="Medina N."/>
            <person name="Mellado R.P."/>
            <person name="Mizuno M."/>
            <person name="Moestl D."/>
            <person name="Nakai S."/>
            <person name="Noback M."/>
            <person name="Noone D."/>
            <person name="O'Reilly M."/>
            <person name="Ogawa K."/>
            <person name="Ogiwara A."/>
            <person name="Oudega B."/>
            <person name="Park S.-H."/>
            <person name="Parro V."/>
            <person name="Pohl T.M."/>
            <person name="Portetelle D."/>
            <person name="Porwollik S."/>
            <person name="Prescott A.M."/>
            <person name="Presecan E."/>
            <person name="Pujic P."/>
            <person name="Purnelle B."/>
            <person name="Rapoport G."/>
            <person name="Rey M."/>
            <person name="Reynolds S."/>
            <person name="Rieger M."/>
            <person name="Rivolta C."/>
            <person name="Rocha E."/>
            <person name="Roche B."/>
            <person name="Rose M."/>
            <person name="Sadaie Y."/>
            <person name="Sato T."/>
            <person name="Scanlan E."/>
            <person name="Schleich S."/>
            <person name="Schroeter R."/>
            <person name="Scoffone F."/>
            <person name="Sekiguchi J."/>
            <person name="Sekowska A."/>
            <person name="Seror S.J."/>
            <person name="Serror P."/>
            <person name="Shin B.-S."/>
            <person name="Soldo B."/>
            <person name="Sorokin A."/>
            <person name="Tacconi E."/>
            <person name="Takagi T."/>
            <person name="Takahashi H."/>
            <person name="Takemaru K."/>
            <person name="Takeuchi M."/>
            <person name="Tamakoshi A."/>
            <person name="Tanaka T."/>
            <person name="Terpstra P."/>
            <person name="Tognoni A."/>
            <person name="Tosato V."/>
            <person name="Uchiyama S."/>
            <person name="Vandenbol M."/>
            <person name="Vannier F."/>
            <person name="Vassarotti A."/>
            <person name="Viari A."/>
            <person name="Wambutt R."/>
            <person name="Wedler E."/>
            <person name="Wedler H."/>
            <person name="Weitzenegger T."/>
            <person name="Winters P."/>
            <person name="Wipat A."/>
            <person name="Yamamoto H."/>
            <person name="Yamane K."/>
            <person name="Yasumoto K."/>
            <person name="Yata K."/>
            <person name="Yoshida K."/>
            <person name="Yoshikawa H.-F."/>
            <person name="Zumstein E."/>
            <person name="Yoshikawa H."/>
            <person name="Danchin A."/>
        </authorList>
    </citation>
    <scope>NUCLEOTIDE SEQUENCE [LARGE SCALE GENOMIC DNA]</scope>
    <source>
        <strain>168</strain>
    </source>
</reference>
<reference key="4">
    <citation type="journal article" date="1999" name="Genome Res.">
        <title>Detecting and analyzing DNA sequencing errors: toward a higher quality of the Bacillus subtilis genome sequence.</title>
        <authorList>
            <person name="Medigue C."/>
            <person name="Rose M."/>
            <person name="Viari A."/>
            <person name="Danchin A."/>
        </authorList>
    </citation>
    <scope>SEQUENCE REVISION</scope>
</reference>
<dbReference type="EMBL" id="D38161">
    <property type="protein sequence ID" value="BAA07355.1"/>
    <property type="status" value="ALT_FRAME"/>
    <property type="molecule type" value="Genomic_DNA"/>
</dbReference>
<dbReference type="EMBL" id="D50453">
    <property type="protein sequence ID" value="BAA09034.1"/>
    <property type="status" value="ALT_FRAME"/>
    <property type="molecule type" value="Genomic_DNA"/>
</dbReference>
<dbReference type="EMBL" id="AL009126">
    <property type="protein sequence ID" value="CAB12211.2"/>
    <property type="molecule type" value="Genomic_DNA"/>
</dbReference>
<dbReference type="PIR" id="I39892">
    <property type="entry name" value="I39892"/>
</dbReference>
<dbReference type="RefSeq" id="NP_388285.2">
    <property type="nucleotide sequence ID" value="NC_000964.3"/>
</dbReference>
<dbReference type="RefSeq" id="WP_003246580.1">
    <property type="nucleotide sequence ID" value="NZ_OZ025638.1"/>
</dbReference>
<dbReference type="SMR" id="P42961"/>
<dbReference type="FunCoup" id="P42961">
    <property type="interactions" value="12"/>
</dbReference>
<dbReference type="STRING" id="224308.BSU04030"/>
<dbReference type="PaxDb" id="224308-BSU04030"/>
<dbReference type="EnsemblBacteria" id="CAB12211">
    <property type="protein sequence ID" value="CAB12211"/>
    <property type="gene ID" value="BSU_04030"/>
</dbReference>
<dbReference type="GeneID" id="938260"/>
<dbReference type="KEGG" id="bsu:BSU04030"/>
<dbReference type="PATRIC" id="fig|224308.179.peg.428"/>
<dbReference type="eggNOG" id="COG0764">
    <property type="taxonomic scope" value="Bacteria"/>
</dbReference>
<dbReference type="InParanoid" id="P42961"/>
<dbReference type="OrthoDB" id="9772788at2"/>
<dbReference type="PhylomeDB" id="P42961"/>
<dbReference type="BioCyc" id="BSUB:BSU04030-MONOMER"/>
<dbReference type="Proteomes" id="UP000001570">
    <property type="component" value="Chromosome"/>
</dbReference>
<dbReference type="CDD" id="cd01288">
    <property type="entry name" value="FabZ"/>
    <property type="match status" value="1"/>
</dbReference>
<dbReference type="Gene3D" id="3.10.129.10">
    <property type="entry name" value="Hotdog Thioesterase"/>
    <property type="match status" value="1"/>
</dbReference>
<dbReference type="InterPro" id="IPR013114">
    <property type="entry name" value="FabA_FabZ"/>
</dbReference>
<dbReference type="InterPro" id="IPR029069">
    <property type="entry name" value="HotDog_dom_sf"/>
</dbReference>
<dbReference type="PANTHER" id="PTHR30272:SF3">
    <property type="entry name" value="(3R)-HYDROXYMYRISTOYL-[ACYL CARRIER PROTEIN] DEHYDRATASE"/>
    <property type="match status" value="1"/>
</dbReference>
<dbReference type="PANTHER" id="PTHR30272">
    <property type="entry name" value="3-HYDROXYACYL-[ACYL-CARRIER-PROTEIN] DEHYDRATASE"/>
    <property type="match status" value="1"/>
</dbReference>
<dbReference type="Pfam" id="PF07977">
    <property type="entry name" value="FabA"/>
    <property type="match status" value="1"/>
</dbReference>
<dbReference type="SUPFAM" id="SSF54637">
    <property type="entry name" value="Thioesterase/thiol ester dehydrase-isomerase"/>
    <property type="match status" value="1"/>
</dbReference>
<gene>
    <name type="primary">ycsD</name>
    <name type="ordered locus">BSU04030</name>
</gene>
<evidence type="ECO:0000305" key="1"/>
<feature type="chain" id="PRO_0000091773" description="Uncharacterized protein YcsD">
    <location>
        <begin position="1"/>
        <end position="130"/>
    </location>
</feature>
<sequence>MNSLSLPHRYPFLFIDGVTDSEPGKHAAAYKLISENDWFITDTQTEMPFSLVIEALAQTAAFTGITDENSLGLLSSVKKAEKLGEAVPGDRLDLTFEVTRNRRGFVFGHAKASVGEQPVAEAEIGIYIEK</sequence>
<organism>
    <name type="scientific">Bacillus subtilis (strain 168)</name>
    <dbReference type="NCBI Taxonomy" id="224308"/>
    <lineage>
        <taxon>Bacteria</taxon>
        <taxon>Bacillati</taxon>
        <taxon>Bacillota</taxon>
        <taxon>Bacilli</taxon>
        <taxon>Bacillales</taxon>
        <taxon>Bacillaceae</taxon>
        <taxon>Bacillus</taxon>
    </lineage>
</organism>
<name>YCSD_BACSU</name>
<comment type="similarity">
    <text evidence="1">Belongs to the thioester dehydratase family. FabZ subfamily.</text>
</comment>
<comment type="sequence caution" evidence="1">
    <conflict type="frameshift">
        <sequence resource="EMBL-CDS" id="BAA07355"/>
    </conflict>
</comment>
<comment type="sequence caution" evidence="1">
    <conflict type="frameshift">
        <sequence resource="EMBL-CDS" id="BAA09034"/>
    </conflict>
</comment>
<protein>
    <recommendedName>
        <fullName>Uncharacterized protein YcsD</fullName>
    </recommendedName>
</protein>
<keyword id="KW-1185">Reference proteome</keyword>